<dbReference type="EMBL" id="CP000076">
    <property type="protein sequence ID" value="AAY94779.1"/>
    <property type="molecule type" value="Genomic_DNA"/>
</dbReference>
<dbReference type="RefSeq" id="WP_002555481.1">
    <property type="nucleotide sequence ID" value="NC_004129.6"/>
</dbReference>
<dbReference type="SMR" id="Q4K541"/>
<dbReference type="STRING" id="220664.PFL_5574"/>
<dbReference type="GeneID" id="98285430"/>
<dbReference type="KEGG" id="pfl:PFL_5574"/>
<dbReference type="eggNOG" id="COG0255">
    <property type="taxonomic scope" value="Bacteria"/>
</dbReference>
<dbReference type="HOGENOM" id="CLU_158491_1_2_6"/>
<dbReference type="Proteomes" id="UP000008540">
    <property type="component" value="Chromosome"/>
</dbReference>
<dbReference type="GO" id="GO:0022625">
    <property type="term" value="C:cytosolic large ribosomal subunit"/>
    <property type="evidence" value="ECO:0007669"/>
    <property type="project" value="TreeGrafter"/>
</dbReference>
<dbReference type="GO" id="GO:0003735">
    <property type="term" value="F:structural constituent of ribosome"/>
    <property type="evidence" value="ECO:0007669"/>
    <property type="project" value="InterPro"/>
</dbReference>
<dbReference type="GO" id="GO:0006412">
    <property type="term" value="P:translation"/>
    <property type="evidence" value="ECO:0007669"/>
    <property type="project" value="UniProtKB-UniRule"/>
</dbReference>
<dbReference type="CDD" id="cd00427">
    <property type="entry name" value="Ribosomal_L29_HIP"/>
    <property type="match status" value="1"/>
</dbReference>
<dbReference type="FunFam" id="1.10.287.310:FF:000001">
    <property type="entry name" value="50S ribosomal protein L29"/>
    <property type="match status" value="1"/>
</dbReference>
<dbReference type="Gene3D" id="1.10.287.310">
    <property type="match status" value="1"/>
</dbReference>
<dbReference type="HAMAP" id="MF_00374">
    <property type="entry name" value="Ribosomal_uL29"/>
    <property type="match status" value="1"/>
</dbReference>
<dbReference type="InterPro" id="IPR050063">
    <property type="entry name" value="Ribosomal_protein_uL29"/>
</dbReference>
<dbReference type="InterPro" id="IPR001854">
    <property type="entry name" value="Ribosomal_uL29"/>
</dbReference>
<dbReference type="InterPro" id="IPR018254">
    <property type="entry name" value="Ribosomal_uL29_CS"/>
</dbReference>
<dbReference type="InterPro" id="IPR036049">
    <property type="entry name" value="Ribosomal_uL29_sf"/>
</dbReference>
<dbReference type="NCBIfam" id="TIGR00012">
    <property type="entry name" value="L29"/>
    <property type="match status" value="1"/>
</dbReference>
<dbReference type="PANTHER" id="PTHR10916">
    <property type="entry name" value="60S RIBOSOMAL PROTEIN L35/50S RIBOSOMAL PROTEIN L29"/>
    <property type="match status" value="1"/>
</dbReference>
<dbReference type="PANTHER" id="PTHR10916:SF0">
    <property type="entry name" value="LARGE RIBOSOMAL SUBUNIT PROTEIN UL29C"/>
    <property type="match status" value="1"/>
</dbReference>
<dbReference type="Pfam" id="PF00831">
    <property type="entry name" value="Ribosomal_L29"/>
    <property type="match status" value="1"/>
</dbReference>
<dbReference type="SUPFAM" id="SSF46561">
    <property type="entry name" value="Ribosomal protein L29 (L29p)"/>
    <property type="match status" value="1"/>
</dbReference>
<dbReference type="PROSITE" id="PS00579">
    <property type="entry name" value="RIBOSOMAL_L29"/>
    <property type="match status" value="1"/>
</dbReference>
<gene>
    <name evidence="1" type="primary">rpmC</name>
    <name type="ordered locus">PFL_5574</name>
</gene>
<organism>
    <name type="scientific">Pseudomonas fluorescens (strain ATCC BAA-477 / NRRL B-23932 / Pf-5)</name>
    <dbReference type="NCBI Taxonomy" id="220664"/>
    <lineage>
        <taxon>Bacteria</taxon>
        <taxon>Pseudomonadati</taxon>
        <taxon>Pseudomonadota</taxon>
        <taxon>Gammaproteobacteria</taxon>
        <taxon>Pseudomonadales</taxon>
        <taxon>Pseudomonadaceae</taxon>
        <taxon>Pseudomonas</taxon>
    </lineage>
</organism>
<accession>Q4K541</accession>
<protein>
    <recommendedName>
        <fullName evidence="1">Large ribosomal subunit protein uL29</fullName>
    </recommendedName>
    <alternativeName>
        <fullName evidence="2">50S ribosomal protein L29</fullName>
    </alternativeName>
</protein>
<proteinExistence type="inferred from homology"/>
<comment type="similarity">
    <text evidence="1">Belongs to the universal ribosomal protein uL29 family.</text>
</comment>
<sequence length="63" mass="7172">MKANELREKSAQQLNEQLLGLLRDQFNLRMQKATGQLGQSHLLSQVKRDIARVKTVLNQQAGK</sequence>
<feature type="chain" id="PRO_1000007564" description="Large ribosomal subunit protein uL29">
    <location>
        <begin position="1"/>
        <end position="63"/>
    </location>
</feature>
<evidence type="ECO:0000255" key="1">
    <source>
        <dbReference type="HAMAP-Rule" id="MF_00374"/>
    </source>
</evidence>
<evidence type="ECO:0000305" key="2"/>
<keyword id="KW-0687">Ribonucleoprotein</keyword>
<keyword id="KW-0689">Ribosomal protein</keyword>
<name>RL29_PSEF5</name>
<reference key="1">
    <citation type="journal article" date="2005" name="Nat. Biotechnol.">
        <title>Complete genome sequence of the plant commensal Pseudomonas fluorescens Pf-5.</title>
        <authorList>
            <person name="Paulsen I.T."/>
            <person name="Press C.M."/>
            <person name="Ravel J."/>
            <person name="Kobayashi D.Y."/>
            <person name="Myers G.S.A."/>
            <person name="Mavrodi D.V."/>
            <person name="DeBoy R.T."/>
            <person name="Seshadri R."/>
            <person name="Ren Q."/>
            <person name="Madupu R."/>
            <person name="Dodson R.J."/>
            <person name="Durkin A.S."/>
            <person name="Brinkac L.M."/>
            <person name="Daugherty S.C."/>
            <person name="Sullivan S.A."/>
            <person name="Rosovitz M.J."/>
            <person name="Gwinn M.L."/>
            <person name="Zhou L."/>
            <person name="Schneider D.J."/>
            <person name="Cartinhour S.W."/>
            <person name="Nelson W.C."/>
            <person name="Weidman J."/>
            <person name="Watkins K."/>
            <person name="Tran K."/>
            <person name="Khouri H."/>
            <person name="Pierson E.A."/>
            <person name="Pierson L.S. III"/>
            <person name="Thomashow L.S."/>
            <person name="Loper J.E."/>
        </authorList>
    </citation>
    <scope>NUCLEOTIDE SEQUENCE [LARGE SCALE GENOMIC DNA]</scope>
    <source>
        <strain>ATCC BAA-477 / NRRL B-23932 / Pf-5</strain>
    </source>
</reference>